<organism>
    <name type="scientific">Piper nigrum</name>
    <name type="common">Black pepper</name>
    <dbReference type="NCBI Taxonomy" id="13216"/>
    <lineage>
        <taxon>Eukaryota</taxon>
        <taxon>Viridiplantae</taxon>
        <taxon>Streptophyta</taxon>
        <taxon>Embryophyta</taxon>
        <taxon>Tracheophyta</taxon>
        <taxon>Spermatophyta</taxon>
        <taxon>Magnoliopsida</taxon>
        <taxon>Magnoliidae</taxon>
        <taxon>Piperales</taxon>
        <taxon>Piperaceae</taxon>
        <taxon>Piper</taxon>
    </lineage>
</organism>
<keyword id="KW-0456">Lyase</keyword>
<keyword id="KW-0460">Magnesium</keyword>
<keyword id="KW-0479">Metal-binding</keyword>
<sequence>MACVSDLVAFTQPLIIGAKPLEIVRRSAAFHPNVWGDYFLKLSQDEKKLESMRERAKVLKEKVLKKLSTIEGGERLELIDTLYHLGVAYNFEKEIEEALEKIYKAYDEDATQDNLCTLALRFRLLRQHGWNASSDVFNKFKETKNGNFKESVASDVLGMLSLYEASYVGTKEDKILEEAISFTTRNLSAALPNMEPLLAERVAHSLELPLHKRLQRLEARYFITMYEKNNAHDEMLLEYAKLDYNLLQALHQNEMKELTKWWTKIDLVGKMKFPRDRVTECYFWPLGAFFEPQHSRGRIFATKITQLTSIIDDLYDVYGTQEELQLFTDVIQRWDMNAKKSLPDYIKPLYEALLSTLKDFEEELSLEGNAYRASFMQQAMKNICMAYFDEAKWYNRGTTPKVEEYLNSAEISCGYPVVATACFTGAGEITTKKLLEWIQSQPKYMKDTCRLCRIVDDIKTYKFEEERGHVASVVACYMEEHKCNEDEALEKLNEDVMNTWKDINKACMRPTPFPMVVMNIIRNLSRVMEILYQFGDGYTFADTVTKERLNLLLKDPIPV</sequence>
<evidence type="ECO:0000250" key="1">
    <source>
        <dbReference type="UniProtKB" id="A0A1C9J6A7"/>
    </source>
</evidence>
<evidence type="ECO:0000250" key="2">
    <source>
        <dbReference type="UniProtKB" id="Q40577"/>
    </source>
</evidence>
<evidence type="ECO:0000269" key="3">
    <source>
    </source>
</evidence>
<evidence type="ECO:0000303" key="4">
    <source>
    </source>
</evidence>
<evidence type="ECO:0000305" key="5"/>
<comment type="function">
    <text evidence="3">Sesquiterpene synthase involved in the biosynthesis of volatile compounds that contribute to the characteristic flavors of black pepper (PubMed:29248443). Mediates the conversion of (2E,6E)-farnesyl diphosphate (FPP) into beta-caryophyllene and, as a minor compound, into alpha-humulene (PubMed:29248443).</text>
</comment>
<comment type="catalytic activity">
    <reaction evidence="3">
        <text>(2E,6E)-farnesyl diphosphate = (-)-(E)-beta-caryophyllene + diphosphate</text>
        <dbReference type="Rhea" id="RHEA:28294"/>
        <dbReference type="ChEBI" id="CHEBI:10357"/>
        <dbReference type="ChEBI" id="CHEBI:33019"/>
        <dbReference type="ChEBI" id="CHEBI:175763"/>
        <dbReference type="EC" id="4.2.3.57"/>
    </reaction>
    <physiologicalReaction direction="left-to-right" evidence="3">
        <dbReference type="Rhea" id="RHEA:28295"/>
    </physiologicalReaction>
</comment>
<comment type="catalytic activity">
    <reaction evidence="3">
        <text>(2E,6E)-farnesyl diphosphate = alpha-humulene + diphosphate</text>
        <dbReference type="Rhea" id="RHEA:31895"/>
        <dbReference type="ChEBI" id="CHEBI:5768"/>
        <dbReference type="ChEBI" id="CHEBI:33019"/>
        <dbReference type="ChEBI" id="CHEBI:175763"/>
        <dbReference type="EC" id="4.2.3.104"/>
    </reaction>
    <physiologicalReaction direction="left-to-right" evidence="3">
        <dbReference type="Rhea" id="RHEA:31896"/>
    </physiologicalReaction>
</comment>
<comment type="cofactor">
    <cofactor evidence="1">
        <name>Mg(2+)</name>
        <dbReference type="ChEBI" id="CHEBI:18420"/>
    </cofactor>
    <cofactor evidence="1">
        <name>Mn(2+)</name>
        <dbReference type="ChEBI" id="CHEBI:29035"/>
    </cofactor>
    <text evidence="1">Binds 3 Mg(2+) or Mn(2+) ions per subunit.</text>
</comment>
<comment type="biophysicochemical properties">
    <kinetics>
        <KM evidence="3">21 uM for (2E,6E)-farnesyl diphosphate</KM>
        <text evidence="3">kcat is 0.455 sec(-1) with (2E,6E)-farnesyl diphosphate as substrate.</text>
    </kinetics>
</comment>
<comment type="pathway">
    <text evidence="3">Secondary metabolite biosynthesis; terpenoid biosynthesis.</text>
</comment>
<comment type="tissue specificity">
    <text evidence="3">Mostly expressed in stems and, to a lower extent, in leaves, roots and fruits.</text>
</comment>
<comment type="domain">
    <text evidence="2">The Asp-Asp-Xaa-Xaa-Asp/Glu (DDXXD/E) motif is important for the catalytic activity, presumably through binding to Mg(2+).</text>
</comment>
<comment type="similarity">
    <text evidence="5">Belongs to the terpene synthase family. Tpsa subfamily.</text>
</comment>
<gene>
    <name evidence="4" type="primary">TPS1</name>
</gene>
<accession>A0A1V0E492</accession>
<feature type="chain" id="PRO_0000454951" description="Terpene synthase 1">
    <location>
        <begin position="1"/>
        <end position="559"/>
    </location>
</feature>
<feature type="short sequence motif" description="DDXXD motif" evidence="1">
    <location>
        <begin position="312"/>
        <end position="316"/>
    </location>
</feature>
<feature type="binding site" evidence="2">
    <location>
        <position position="312"/>
    </location>
    <ligand>
        <name>Mg(2+)</name>
        <dbReference type="ChEBI" id="CHEBI:18420"/>
        <label>1</label>
    </ligand>
</feature>
<feature type="binding site" evidence="2">
    <location>
        <position position="312"/>
    </location>
    <ligand>
        <name>Mg(2+)</name>
        <dbReference type="ChEBI" id="CHEBI:18420"/>
        <label>2</label>
    </ligand>
</feature>
<feature type="binding site" evidence="2">
    <location>
        <position position="316"/>
    </location>
    <ligand>
        <name>Mg(2+)</name>
        <dbReference type="ChEBI" id="CHEBI:18420"/>
        <label>1</label>
    </ligand>
</feature>
<feature type="binding site" evidence="2">
    <location>
        <position position="316"/>
    </location>
    <ligand>
        <name>Mg(2+)</name>
        <dbReference type="ChEBI" id="CHEBI:18420"/>
        <label>2</label>
    </ligand>
</feature>
<feature type="binding site" evidence="2">
    <location>
        <position position="456"/>
    </location>
    <ligand>
        <name>Mg(2+)</name>
        <dbReference type="ChEBI" id="CHEBI:18420"/>
        <label>3</label>
    </ligand>
</feature>
<feature type="binding site" evidence="2">
    <location>
        <position position="464"/>
    </location>
    <ligand>
        <name>Mg(2+)</name>
        <dbReference type="ChEBI" id="CHEBI:18420"/>
        <label>3</label>
    </ligand>
</feature>
<reference key="1">
    <citation type="journal article" date="2018" name="Arch. Biochem. Biophys.">
        <title>Molecular cloning and functional characterization of three terpene synthases from unripe fruit of black pepper (Piper nigrum).</title>
        <authorList>
            <person name="Jin Z."/>
            <person name="Kwon M."/>
            <person name="Lee A.-R."/>
            <person name="Ro D.-K."/>
            <person name="Wungsintaweekul J."/>
            <person name="Kim S.-U."/>
        </authorList>
    </citation>
    <scope>NUCLEOTIDE SEQUENCE [MRNA]</scope>
    <scope>FUNCTION</scope>
    <scope>CATALYTIC ACTIVITY</scope>
    <scope>PATHWAY</scope>
    <scope>BIOPHYSICOCHEMICAL PROPERTIES</scope>
    <scope>TISSUE SPECIFICITY</scope>
</reference>
<protein>
    <recommendedName>
        <fullName evidence="4">Terpene synthase 1</fullName>
        <shortName evidence="4">PnTPS1</shortName>
    </recommendedName>
    <alternativeName>
        <fullName evidence="4">Alpha-humulene synthase</fullName>
        <ecNumber evidence="3">4.2.3.104</ecNumber>
    </alternativeName>
    <alternativeName>
        <fullName evidence="4">Beta-caryophyllene synthase</fullName>
        <shortName evidence="4">PnCPS</shortName>
        <ecNumber evidence="3">4.2.3.57</ecNumber>
    </alternativeName>
</protein>
<name>TPS1_PIPNI</name>
<dbReference type="EC" id="4.2.3.104" evidence="3"/>
<dbReference type="EC" id="4.2.3.57" evidence="3"/>
<dbReference type="EMBL" id="KU953957">
    <property type="protein sequence ID" value="ARB08605.1"/>
    <property type="molecule type" value="mRNA"/>
</dbReference>
<dbReference type="SMR" id="A0A1V0E492"/>
<dbReference type="BRENDA" id="4.2.3.57">
    <property type="organism ID" value="4863"/>
</dbReference>
<dbReference type="BRENDA" id="4.2.3.89">
    <property type="organism ID" value="4863"/>
</dbReference>
<dbReference type="UniPathway" id="UPA00213"/>
<dbReference type="GO" id="GO:0080017">
    <property type="term" value="F:alpha-humulene synthase activity"/>
    <property type="evidence" value="ECO:0000314"/>
    <property type="project" value="UniProtKB"/>
</dbReference>
<dbReference type="GO" id="GO:0000287">
    <property type="term" value="F:magnesium ion binding"/>
    <property type="evidence" value="ECO:0007669"/>
    <property type="project" value="InterPro"/>
</dbReference>
<dbReference type="GO" id="GO:0010333">
    <property type="term" value="F:terpene synthase activity"/>
    <property type="evidence" value="ECO:0000314"/>
    <property type="project" value="UniProtKB"/>
</dbReference>
<dbReference type="GO" id="GO:1901937">
    <property type="term" value="P:beta-caryophyllene biosynthetic process"/>
    <property type="evidence" value="ECO:0000314"/>
    <property type="project" value="UniProtKB"/>
</dbReference>
<dbReference type="GO" id="GO:0016102">
    <property type="term" value="P:diterpenoid biosynthetic process"/>
    <property type="evidence" value="ECO:0007669"/>
    <property type="project" value="InterPro"/>
</dbReference>
<dbReference type="GO" id="GO:0010597">
    <property type="term" value="P:green leaf volatile biosynthetic process"/>
    <property type="evidence" value="ECO:0000314"/>
    <property type="project" value="UniProtKB"/>
</dbReference>
<dbReference type="GO" id="GO:0051762">
    <property type="term" value="P:sesquiterpene biosynthetic process"/>
    <property type="evidence" value="ECO:0000314"/>
    <property type="project" value="UniProtKB"/>
</dbReference>
<dbReference type="CDD" id="cd00684">
    <property type="entry name" value="Terpene_cyclase_plant_C1"/>
    <property type="match status" value="1"/>
</dbReference>
<dbReference type="FunFam" id="1.10.600.10:FF:000007">
    <property type="entry name" value="Isoprene synthase, chloroplastic"/>
    <property type="match status" value="1"/>
</dbReference>
<dbReference type="FunFam" id="1.50.10.130:FF:000001">
    <property type="entry name" value="Isoprene synthase, chloroplastic"/>
    <property type="match status" value="1"/>
</dbReference>
<dbReference type="Gene3D" id="1.10.600.10">
    <property type="entry name" value="Farnesyl Diphosphate Synthase"/>
    <property type="match status" value="1"/>
</dbReference>
<dbReference type="Gene3D" id="1.50.10.130">
    <property type="entry name" value="Terpene synthase, N-terminal domain"/>
    <property type="match status" value="1"/>
</dbReference>
<dbReference type="InterPro" id="IPR008949">
    <property type="entry name" value="Isoprenoid_synthase_dom_sf"/>
</dbReference>
<dbReference type="InterPro" id="IPR034741">
    <property type="entry name" value="Terpene_cyclase-like_1_C"/>
</dbReference>
<dbReference type="InterPro" id="IPR044814">
    <property type="entry name" value="Terpene_cyclase_plant_C1"/>
</dbReference>
<dbReference type="InterPro" id="IPR001906">
    <property type="entry name" value="Terpene_synth_N"/>
</dbReference>
<dbReference type="InterPro" id="IPR036965">
    <property type="entry name" value="Terpene_synth_N_sf"/>
</dbReference>
<dbReference type="InterPro" id="IPR050148">
    <property type="entry name" value="Terpene_synthase-like"/>
</dbReference>
<dbReference type="InterPro" id="IPR005630">
    <property type="entry name" value="Terpene_synthase_metal-bd"/>
</dbReference>
<dbReference type="InterPro" id="IPR008930">
    <property type="entry name" value="Terpenoid_cyclase/PrenylTrfase"/>
</dbReference>
<dbReference type="InterPro" id="IPR019734">
    <property type="entry name" value="TPR_rpt"/>
</dbReference>
<dbReference type="PANTHER" id="PTHR31225:SF93">
    <property type="entry name" value="ALPHA-HUMULENE_(-)-(E)-BETA-CARYOPHYLLENE SYNTHASE"/>
    <property type="match status" value="1"/>
</dbReference>
<dbReference type="PANTHER" id="PTHR31225">
    <property type="entry name" value="OS04G0344100 PROTEIN-RELATED"/>
    <property type="match status" value="1"/>
</dbReference>
<dbReference type="Pfam" id="PF01397">
    <property type="entry name" value="Terpene_synth"/>
    <property type="match status" value="1"/>
</dbReference>
<dbReference type="Pfam" id="PF03936">
    <property type="entry name" value="Terpene_synth_C"/>
    <property type="match status" value="1"/>
</dbReference>
<dbReference type="SFLD" id="SFLDS00005">
    <property type="entry name" value="Isoprenoid_Synthase_Type_I"/>
    <property type="match status" value="1"/>
</dbReference>
<dbReference type="SFLD" id="SFLDG01019">
    <property type="entry name" value="Terpene_Cyclase_Like_1_C_Termi"/>
    <property type="match status" value="1"/>
</dbReference>
<dbReference type="SUPFAM" id="SSF48239">
    <property type="entry name" value="Terpenoid cyclases/Protein prenyltransferases"/>
    <property type="match status" value="1"/>
</dbReference>
<dbReference type="SUPFAM" id="SSF48576">
    <property type="entry name" value="Terpenoid synthases"/>
    <property type="match status" value="1"/>
</dbReference>
<dbReference type="PROSITE" id="PS50005">
    <property type="entry name" value="TPR"/>
    <property type="match status" value="1"/>
</dbReference>
<proteinExistence type="evidence at protein level"/>